<gene>
    <name type="ordered locus">At1g68735</name>
    <name type="ORF">F14K14</name>
    <name type="ORF">F24J5</name>
</gene>
<name>DF123_ARATH</name>
<reference key="1">
    <citation type="journal article" date="2000" name="Nature">
        <title>Sequence and analysis of chromosome 1 of the plant Arabidopsis thaliana.</title>
        <authorList>
            <person name="Theologis A."/>
            <person name="Ecker J.R."/>
            <person name="Palm C.J."/>
            <person name="Federspiel N.A."/>
            <person name="Kaul S."/>
            <person name="White O."/>
            <person name="Alonso J."/>
            <person name="Altafi H."/>
            <person name="Araujo R."/>
            <person name="Bowman C.L."/>
            <person name="Brooks S.Y."/>
            <person name="Buehler E."/>
            <person name="Chan A."/>
            <person name="Chao Q."/>
            <person name="Chen H."/>
            <person name="Cheuk R.F."/>
            <person name="Chin C.W."/>
            <person name="Chung M.K."/>
            <person name="Conn L."/>
            <person name="Conway A.B."/>
            <person name="Conway A.R."/>
            <person name="Creasy T.H."/>
            <person name="Dewar K."/>
            <person name="Dunn P."/>
            <person name="Etgu P."/>
            <person name="Feldblyum T.V."/>
            <person name="Feng J.-D."/>
            <person name="Fong B."/>
            <person name="Fujii C.Y."/>
            <person name="Gill J.E."/>
            <person name="Goldsmith A.D."/>
            <person name="Haas B."/>
            <person name="Hansen N.F."/>
            <person name="Hughes B."/>
            <person name="Huizar L."/>
            <person name="Hunter J.L."/>
            <person name="Jenkins J."/>
            <person name="Johnson-Hopson C."/>
            <person name="Khan S."/>
            <person name="Khaykin E."/>
            <person name="Kim C.J."/>
            <person name="Koo H.L."/>
            <person name="Kremenetskaia I."/>
            <person name="Kurtz D.B."/>
            <person name="Kwan A."/>
            <person name="Lam B."/>
            <person name="Langin-Hooper S."/>
            <person name="Lee A."/>
            <person name="Lee J.M."/>
            <person name="Lenz C.A."/>
            <person name="Li J.H."/>
            <person name="Li Y.-P."/>
            <person name="Lin X."/>
            <person name="Liu S.X."/>
            <person name="Liu Z.A."/>
            <person name="Luros J.S."/>
            <person name="Maiti R."/>
            <person name="Marziali A."/>
            <person name="Militscher J."/>
            <person name="Miranda M."/>
            <person name="Nguyen M."/>
            <person name="Nierman W.C."/>
            <person name="Osborne B.I."/>
            <person name="Pai G."/>
            <person name="Peterson J."/>
            <person name="Pham P.K."/>
            <person name="Rizzo M."/>
            <person name="Rooney T."/>
            <person name="Rowley D."/>
            <person name="Sakano H."/>
            <person name="Salzberg S.L."/>
            <person name="Schwartz J.R."/>
            <person name="Shinn P."/>
            <person name="Southwick A.M."/>
            <person name="Sun H."/>
            <person name="Tallon L.J."/>
            <person name="Tambunga G."/>
            <person name="Toriumi M.J."/>
            <person name="Town C.D."/>
            <person name="Utterback T."/>
            <person name="Van Aken S."/>
            <person name="Vaysberg M."/>
            <person name="Vysotskaia V.S."/>
            <person name="Walker M."/>
            <person name="Wu D."/>
            <person name="Yu G."/>
            <person name="Fraser C.M."/>
            <person name="Venter J.C."/>
            <person name="Davis R.W."/>
        </authorList>
    </citation>
    <scope>NUCLEOTIDE SEQUENCE [LARGE SCALE GENOMIC DNA]</scope>
    <source>
        <strain>cv. Columbia</strain>
    </source>
</reference>
<reference key="2">
    <citation type="journal article" date="2017" name="Plant J.">
        <title>Araport11: a complete reannotation of the Arabidopsis thaliana reference genome.</title>
        <authorList>
            <person name="Cheng C.Y."/>
            <person name="Krishnakumar V."/>
            <person name="Chan A.P."/>
            <person name="Thibaud-Nissen F."/>
            <person name="Schobel S."/>
            <person name="Town C.D."/>
        </authorList>
    </citation>
    <scope>GENOME REANNOTATION</scope>
    <source>
        <strain>cv. Columbia</strain>
    </source>
</reference>
<reference key="3">
    <citation type="submission" date="2006-07" db="EMBL/GenBank/DDBJ databases">
        <title>Large-scale analysis of RIKEN Arabidopsis full-length (RAFL) cDNAs.</title>
        <authorList>
            <person name="Totoki Y."/>
            <person name="Seki M."/>
            <person name="Ishida J."/>
            <person name="Nakajima M."/>
            <person name="Enju A."/>
            <person name="Kamiya A."/>
            <person name="Narusaka M."/>
            <person name="Shin-i T."/>
            <person name="Nakagawa M."/>
            <person name="Sakamoto N."/>
            <person name="Oishi K."/>
            <person name="Kohara Y."/>
            <person name="Kobayashi M."/>
            <person name="Toyoda A."/>
            <person name="Sakaki Y."/>
            <person name="Sakurai T."/>
            <person name="Iida K."/>
            <person name="Akiyama K."/>
            <person name="Satou M."/>
            <person name="Toyoda T."/>
            <person name="Konagaya A."/>
            <person name="Carninci P."/>
            <person name="Kawai J."/>
            <person name="Hayashizaki Y."/>
            <person name="Shinozaki K."/>
        </authorList>
    </citation>
    <scope>NUCLEOTIDE SEQUENCE [LARGE SCALE MRNA]</scope>
    <source>
        <strain>cv. Columbia</strain>
    </source>
</reference>
<reference key="4">
    <citation type="journal article" date="2007" name="Plant J.">
        <title>Small cysteine-rich peptides resembling antimicrobial peptides have been under-predicted in plants.</title>
        <authorList>
            <person name="Silverstein K.A.T."/>
            <person name="Moskal W.A. Jr."/>
            <person name="Wu H.C."/>
            <person name="Underwood B.A."/>
            <person name="Graham M.A."/>
            <person name="Town C.D."/>
            <person name="VandenBosch K.A."/>
        </authorList>
    </citation>
    <scope>NUCLEOTIDE SEQUENCE [LARGE SCALE MRNA] OF 1-49</scope>
    <source>
        <strain>cv. Columbia</strain>
    </source>
</reference>
<reference key="5">
    <citation type="journal article" date="2005" name="Plant Physiol.">
        <title>Genome organization of more than 300 defensin-like genes in Arabidopsis.</title>
        <authorList>
            <person name="Silverstein K.A.T."/>
            <person name="Graham M.A."/>
            <person name="Paape T.D."/>
            <person name="VandenBosch K.A."/>
        </authorList>
    </citation>
    <scope>GENE FAMILY</scope>
</reference>
<organism>
    <name type="scientific">Arabidopsis thaliana</name>
    <name type="common">Mouse-ear cress</name>
    <dbReference type="NCBI Taxonomy" id="3702"/>
    <lineage>
        <taxon>Eukaryota</taxon>
        <taxon>Viridiplantae</taxon>
        <taxon>Streptophyta</taxon>
        <taxon>Embryophyta</taxon>
        <taxon>Tracheophyta</taxon>
        <taxon>Spermatophyta</taxon>
        <taxon>Magnoliopsida</taxon>
        <taxon>eudicotyledons</taxon>
        <taxon>Gunneridae</taxon>
        <taxon>Pentapetalae</taxon>
        <taxon>rosids</taxon>
        <taxon>malvids</taxon>
        <taxon>Brassicales</taxon>
        <taxon>Brassicaceae</taxon>
        <taxon>Camelineae</taxon>
        <taxon>Arabidopsis</taxon>
    </lineage>
</organism>
<protein>
    <recommendedName>
        <fullName>Defensin-like protein 123</fullName>
    </recommendedName>
</protein>
<keyword id="KW-0929">Antimicrobial</keyword>
<keyword id="KW-1015">Disulfide bond</keyword>
<keyword id="KW-0295">Fungicide</keyword>
<keyword id="KW-0611">Plant defense</keyword>
<keyword id="KW-1185">Reference proteome</keyword>
<dbReference type="EMBL" id="AC008075">
    <property type="status" value="NOT_ANNOTATED_CDS"/>
    <property type="molecule type" value="Genomic_DNA"/>
</dbReference>
<dbReference type="EMBL" id="AC011914">
    <property type="status" value="NOT_ANNOTATED_CDS"/>
    <property type="molecule type" value="Genomic_DNA"/>
</dbReference>
<dbReference type="EMBL" id="CP002684">
    <property type="status" value="NOT_ANNOTATED_CDS"/>
    <property type="molecule type" value="Genomic_DNA"/>
</dbReference>
<dbReference type="EMBL" id="AK229579">
    <property type="protein sequence ID" value="BAF01429.1"/>
    <property type="molecule type" value="mRNA"/>
</dbReference>
<dbReference type="EMBL" id="EF182848">
    <property type="status" value="NOT_ANNOTATED_CDS"/>
    <property type="molecule type" value="mRNA"/>
</dbReference>
<dbReference type="SMR" id="Q0WN71"/>
<dbReference type="Araport" id="AT1G68735"/>
<dbReference type="TAIR" id="AT1G68735"/>
<dbReference type="InParanoid" id="Q0WN71"/>
<dbReference type="Proteomes" id="UP000006548">
    <property type="component" value="Chromosome 1"/>
</dbReference>
<dbReference type="GO" id="GO:0050832">
    <property type="term" value="P:defense response to fungus"/>
    <property type="evidence" value="ECO:0007669"/>
    <property type="project" value="UniProtKB-KW"/>
</dbReference>
<dbReference type="GO" id="GO:0031640">
    <property type="term" value="P:killing of cells of another organism"/>
    <property type="evidence" value="ECO:0007669"/>
    <property type="project" value="UniProtKB-KW"/>
</dbReference>
<dbReference type="InterPro" id="IPR010851">
    <property type="entry name" value="DEFL"/>
</dbReference>
<dbReference type="Pfam" id="PF07333">
    <property type="entry name" value="SLR1-BP"/>
    <property type="match status" value="1"/>
</dbReference>
<accession>Q0WN71</accession>
<evidence type="ECO:0000250" key="1"/>
<evidence type="ECO:0000305" key="2"/>
<sequence>MRPRSRAGDKFMSQGQELCHEYFQLTAPCEKQPCIDMCSSKYKTGKGVCGPAVHQCFCTFSCTV</sequence>
<comment type="similarity">
    <text evidence="2">Belongs to the DEFL family.</text>
</comment>
<comment type="caution">
    <text evidence="2">Could be the product of a pseudogene. Lacks the signal peptide, which is a conserved feature of the family.</text>
</comment>
<feature type="chain" id="PRO_0000379680" description="Defensin-like protein 123">
    <location>
        <begin position="1"/>
        <end position="64"/>
    </location>
</feature>
<feature type="disulfide bond" evidence="1">
    <location>
        <begin position="19"/>
        <end position="62"/>
    </location>
</feature>
<feature type="disulfide bond" evidence="1">
    <location>
        <begin position="29"/>
        <end position="49"/>
    </location>
</feature>
<feature type="disulfide bond" evidence="1">
    <location>
        <begin position="34"/>
        <end position="56"/>
    </location>
</feature>
<feature type="disulfide bond" evidence="1">
    <location>
        <begin position="38"/>
        <end position="58"/>
    </location>
</feature>
<proteinExistence type="uncertain"/>